<name>RL31_STRCO</name>
<keyword id="KW-0479">Metal-binding</keyword>
<keyword id="KW-1185">Reference proteome</keyword>
<keyword id="KW-0687">Ribonucleoprotein</keyword>
<keyword id="KW-0689">Ribosomal protein</keyword>
<keyword id="KW-0694">RNA-binding</keyword>
<keyword id="KW-0699">rRNA-binding</keyword>
<keyword id="KW-0862">Zinc</keyword>
<reference key="1">
    <citation type="journal article" date="2002" name="Nature">
        <title>Complete genome sequence of the model actinomycete Streptomyces coelicolor A3(2).</title>
        <authorList>
            <person name="Bentley S.D."/>
            <person name="Chater K.F."/>
            <person name="Cerdeno-Tarraga A.-M."/>
            <person name="Challis G.L."/>
            <person name="Thomson N.R."/>
            <person name="James K.D."/>
            <person name="Harris D.E."/>
            <person name="Quail M.A."/>
            <person name="Kieser H."/>
            <person name="Harper D."/>
            <person name="Bateman A."/>
            <person name="Brown S."/>
            <person name="Chandra G."/>
            <person name="Chen C.W."/>
            <person name="Collins M."/>
            <person name="Cronin A."/>
            <person name="Fraser A."/>
            <person name="Goble A."/>
            <person name="Hidalgo J."/>
            <person name="Hornsby T."/>
            <person name="Howarth S."/>
            <person name="Huang C.-H."/>
            <person name="Kieser T."/>
            <person name="Larke L."/>
            <person name="Murphy L.D."/>
            <person name="Oliver K."/>
            <person name="O'Neil S."/>
            <person name="Rabbinowitsch E."/>
            <person name="Rajandream M.A."/>
            <person name="Rutherford K.M."/>
            <person name="Rutter S."/>
            <person name="Seeger K."/>
            <person name="Saunders D."/>
            <person name="Sharp S."/>
            <person name="Squares R."/>
            <person name="Squares S."/>
            <person name="Taylor K."/>
            <person name="Warren T."/>
            <person name="Wietzorrek A."/>
            <person name="Woodward J.R."/>
            <person name="Barrell B.G."/>
            <person name="Parkhill J."/>
            <person name="Hopwood D.A."/>
        </authorList>
    </citation>
    <scope>NUCLEOTIDE SEQUENCE [LARGE SCALE GENOMIC DNA]</scope>
    <source>
        <strain>ATCC BAA-471 / A3(2) / M145</strain>
    </source>
</reference>
<reference key="2">
    <citation type="journal article" date="2001" name="Mol. Microbiol.">
        <title>Defining the disulphide stress response in Streptomyces coelicolor A3(2): identification of the sigmaR regulon.</title>
        <authorList>
            <person name="Paget M.S.B."/>
            <person name="Molle V."/>
            <person name="Cohen G."/>
            <person name="Aharonowitz Y."/>
            <person name="Buttner M.J."/>
        </authorList>
    </citation>
    <scope>INDUCTION</scope>
    <source>
        <strain>A3(2) / M600</strain>
    </source>
</reference>
<evidence type="ECO:0000250" key="1"/>
<evidence type="ECO:0000269" key="2">
    <source>
    </source>
</evidence>
<evidence type="ECO:0000305" key="3"/>
<organism>
    <name type="scientific">Streptomyces coelicolor (strain ATCC BAA-471 / A3(2) / M145)</name>
    <dbReference type="NCBI Taxonomy" id="100226"/>
    <lineage>
        <taxon>Bacteria</taxon>
        <taxon>Bacillati</taxon>
        <taxon>Actinomycetota</taxon>
        <taxon>Actinomycetes</taxon>
        <taxon>Kitasatosporales</taxon>
        <taxon>Streptomycetaceae</taxon>
        <taxon>Streptomyces</taxon>
        <taxon>Streptomyces albidoflavus group</taxon>
    </lineage>
</organism>
<gene>
    <name type="primary">rpmE</name>
    <name type="ordered locus">SCO5359</name>
    <name type="ORF">2SC6G5.03</name>
</gene>
<protein>
    <recommendedName>
        <fullName evidence="3">Large ribosomal subunit protein bL31</fullName>
    </recommendedName>
    <alternativeName>
        <fullName>50S ribosomal protein L31</fullName>
    </alternativeName>
</protein>
<proteinExistence type="evidence at transcript level"/>
<sequence length="74" mass="8119">MKRDIHPEYVETQVSCTCGASFTTRSTIESGTIRAEVCSECHPFYTGKQKILDTGGRVARFEARFGKASAGSKK</sequence>
<dbReference type="EMBL" id="AL939123">
    <property type="protein sequence ID" value="CAB94530.1"/>
    <property type="molecule type" value="Genomic_DNA"/>
</dbReference>
<dbReference type="RefSeq" id="NP_629498.1">
    <property type="nucleotide sequence ID" value="NC_003888.3"/>
</dbReference>
<dbReference type="RefSeq" id="WP_003973638.1">
    <property type="nucleotide sequence ID" value="NZ_VNID01000011.1"/>
</dbReference>
<dbReference type="SMR" id="Q9K4E5"/>
<dbReference type="FunCoup" id="Q9K4E5">
    <property type="interactions" value="87"/>
</dbReference>
<dbReference type="STRING" id="100226.gene:17763011"/>
<dbReference type="PaxDb" id="100226-SCO5359"/>
<dbReference type="GeneID" id="96655357"/>
<dbReference type="KEGG" id="sco:SCO5359"/>
<dbReference type="PATRIC" id="fig|100226.15.peg.5439"/>
<dbReference type="eggNOG" id="COG0254">
    <property type="taxonomic scope" value="Bacteria"/>
</dbReference>
<dbReference type="HOGENOM" id="CLU_114306_4_3_11"/>
<dbReference type="InParanoid" id="Q9K4E5"/>
<dbReference type="OrthoDB" id="9803251at2"/>
<dbReference type="PhylomeDB" id="Q9K4E5"/>
<dbReference type="Proteomes" id="UP000001973">
    <property type="component" value="Chromosome"/>
</dbReference>
<dbReference type="GO" id="GO:1990904">
    <property type="term" value="C:ribonucleoprotein complex"/>
    <property type="evidence" value="ECO:0007669"/>
    <property type="project" value="UniProtKB-KW"/>
</dbReference>
<dbReference type="GO" id="GO:0005840">
    <property type="term" value="C:ribosome"/>
    <property type="evidence" value="ECO:0007669"/>
    <property type="project" value="UniProtKB-KW"/>
</dbReference>
<dbReference type="GO" id="GO:0046872">
    <property type="term" value="F:metal ion binding"/>
    <property type="evidence" value="ECO:0007669"/>
    <property type="project" value="UniProtKB-KW"/>
</dbReference>
<dbReference type="GO" id="GO:0019843">
    <property type="term" value="F:rRNA binding"/>
    <property type="evidence" value="ECO:0007669"/>
    <property type="project" value="UniProtKB-KW"/>
</dbReference>
<dbReference type="GO" id="GO:0003735">
    <property type="term" value="F:structural constituent of ribosome"/>
    <property type="evidence" value="ECO:0007669"/>
    <property type="project" value="InterPro"/>
</dbReference>
<dbReference type="GO" id="GO:0006412">
    <property type="term" value="P:translation"/>
    <property type="evidence" value="ECO:0007669"/>
    <property type="project" value="UniProtKB-UniRule"/>
</dbReference>
<dbReference type="Gene3D" id="4.10.830.30">
    <property type="entry name" value="Ribosomal protein L31"/>
    <property type="match status" value="1"/>
</dbReference>
<dbReference type="HAMAP" id="MF_00501">
    <property type="entry name" value="Ribosomal_bL31_1"/>
    <property type="match status" value="1"/>
</dbReference>
<dbReference type="InterPro" id="IPR034704">
    <property type="entry name" value="Ribosomal_bL28/bL31-like_sf"/>
</dbReference>
<dbReference type="InterPro" id="IPR002150">
    <property type="entry name" value="Ribosomal_bL31"/>
</dbReference>
<dbReference type="InterPro" id="IPR027491">
    <property type="entry name" value="Ribosomal_bL31_A"/>
</dbReference>
<dbReference type="InterPro" id="IPR042105">
    <property type="entry name" value="Ribosomal_bL31_sf"/>
</dbReference>
<dbReference type="NCBIfam" id="TIGR00105">
    <property type="entry name" value="L31"/>
    <property type="match status" value="1"/>
</dbReference>
<dbReference type="NCBIfam" id="NF000612">
    <property type="entry name" value="PRK00019.1"/>
    <property type="match status" value="1"/>
</dbReference>
<dbReference type="NCBIfam" id="NF001809">
    <property type="entry name" value="PRK00528.1"/>
    <property type="match status" value="1"/>
</dbReference>
<dbReference type="PANTHER" id="PTHR33280">
    <property type="entry name" value="50S RIBOSOMAL PROTEIN L31, CHLOROPLASTIC"/>
    <property type="match status" value="1"/>
</dbReference>
<dbReference type="PANTHER" id="PTHR33280:SF1">
    <property type="entry name" value="LARGE RIBOSOMAL SUBUNIT PROTEIN BL31C"/>
    <property type="match status" value="1"/>
</dbReference>
<dbReference type="Pfam" id="PF01197">
    <property type="entry name" value="Ribosomal_L31"/>
    <property type="match status" value="1"/>
</dbReference>
<dbReference type="PRINTS" id="PR01249">
    <property type="entry name" value="RIBOSOMALL31"/>
</dbReference>
<dbReference type="SUPFAM" id="SSF143800">
    <property type="entry name" value="L28p-like"/>
    <property type="match status" value="1"/>
</dbReference>
<dbReference type="PROSITE" id="PS01143">
    <property type="entry name" value="RIBOSOMAL_L31"/>
    <property type="match status" value="1"/>
</dbReference>
<feature type="chain" id="PRO_0000173164" description="Large ribosomal subunit protein bL31">
    <location>
        <begin position="1"/>
        <end position="74"/>
    </location>
</feature>
<feature type="binding site" evidence="1">
    <location>
        <position position="16"/>
    </location>
    <ligand>
        <name>Zn(2+)</name>
        <dbReference type="ChEBI" id="CHEBI:29105"/>
    </ligand>
</feature>
<feature type="binding site" evidence="1">
    <location>
        <position position="18"/>
    </location>
    <ligand>
        <name>Zn(2+)</name>
        <dbReference type="ChEBI" id="CHEBI:29105"/>
    </ligand>
</feature>
<feature type="binding site" evidence="1">
    <location>
        <position position="38"/>
    </location>
    <ligand>
        <name>Zn(2+)</name>
        <dbReference type="ChEBI" id="CHEBI:29105"/>
    </ligand>
</feature>
<feature type="binding site" evidence="1">
    <location>
        <position position="41"/>
    </location>
    <ligand>
        <name>Zn(2+)</name>
        <dbReference type="ChEBI" id="CHEBI:29105"/>
    </ligand>
</feature>
<accession>Q9K4E5</accession>
<comment type="function">
    <text evidence="1">Binds the 23S rRNA.</text>
</comment>
<comment type="cofactor">
    <cofactor evidence="1">
        <name>Zn(2+)</name>
        <dbReference type="ChEBI" id="CHEBI:29105"/>
    </cofactor>
    <text evidence="1">Binds 1 zinc ion per subunit.</text>
</comment>
<comment type="subunit">
    <text evidence="1">Part of the 50S ribosomal subunit.</text>
</comment>
<comment type="induction">
    <text evidence="2">Induced in response to the thiol oxidant diamide, suggesting it is part of a disulfide stress response system. Oxidation of L31 may cause ribosome stalling, which would decrease the protein synthesis rate, allowing the bacteria to concentrate on stress survival.</text>
</comment>
<comment type="similarity">
    <text evidence="3">Belongs to the bacterial ribosomal protein bL31 family. Type A subfamily.</text>
</comment>